<proteinExistence type="inferred from homology"/>
<comment type="similarity">
    <text evidence="1">Belongs to the UPF0398 family.</text>
</comment>
<name>Y1652_BACC0</name>
<accession>B7JHS5</accession>
<feature type="chain" id="PRO_1000200767" description="UPF0398 protein BCAH820_1652">
    <location>
        <begin position="1"/>
        <end position="184"/>
    </location>
</feature>
<organism>
    <name type="scientific">Bacillus cereus (strain AH820)</name>
    <dbReference type="NCBI Taxonomy" id="405535"/>
    <lineage>
        <taxon>Bacteria</taxon>
        <taxon>Bacillati</taxon>
        <taxon>Bacillota</taxon>
        <taxon>Bacilli</taxon>
        <taxon>Bacillales</taxon>
        <taxon>Bacillaceae</taxon>
        <taxon>Bacillus</taxon>
        <taxon>Bacillus cereus group</taxon>
    </lineage>
</organism>
<gene>
    <name type="ordered locus">BCAH820_1652</name>
</gene>
<reference key="1">
    <citation type="submission" date="2008-10" db="EMBL/GenBank/DDBJ databases">
        <title>Genome sequence of Bacillus cereus AH820.</title>
        <authorList>
            <person name="Dodson R.J."/>
            <person name="Durkin A.S."/>
            <person name="Rosovitz M.J."/>
            <person name="Rasko D.A."/>
            <person name="Hoffmaster A."/>
            <person name="Ravel J."/>
            <person name="Sutton G."/>
        </authorList>
    </citation>
    <scope>NUCLEOTIDE SEQUENCE [LARGE SCALE GENOMIC DNA]</scope>
    <source>
        <strain>AH820</strain>
    </source>
</reference>
<sequence length="184" mass="21540">MKVIAVTGYKPFELGIFKNDHPGVECIKKALRRKLTAFVEDGLEWVIISGQLGVELWTAEVVFEIQVEYPDLKLAVFTPFLEQEEGWKEDNREYYEFILSQADHVDSITKRKYESPEQFKLKNQFFIEKSDALLAVYDEEKPGSPKYIVEAAKKKGEIENYHSYFILFSDLQDIIEEEQWNNAE</sequence>
<evidence type="ECO:0000255" key="1">
    <source>
        <dbReference type="HAMAP-Rule" id="MF_01575"/>
    </source>
</evidence>
<dbReference type="EMBL" id="CP001283">
    <property type="protein sequence ID" value="ACK92151.1"/>
    <property type="molecule type" value="Genomic_DNA"/>
</dbReference>
<dbReference type="RefSeq" id="WP_000862923.1">
    <property type="nucleotide sequence ID" value="NC_011773.1"/>
</dbReference>
<dbReference type="SMR" id="B7JHS5"/>
<dbReference type="KEGG" id="bcu:BCAH820_1652"/>
<dbReference type="HOGENOM" id="CLU_105319_0_0_9"/>
<dbReference type="Proteomes" id="UP000001363">
    <property type="component" value="Chromosome"/>
</dbReference>
<dbReference type="Gene3D" id="3.40.50.450">
    <property type="match status" value="1"/>
</dbReference>
<dbReference type="HAMAP" id="MF_01575">
    <property type="entry name" value="UPF0398"/>
    <property type="match status" value="1"/>
</dbReference>
<dbReference type="InterPro" id="IPR010697">
    <property type="entry name" value="YspA"/>
</dbReference>
<dbReference type="NCBIfam" id="NF010181">
    <property type="entry name" value="PRK13660.1"/>
    <property type="match status" value="1"/>
</dbReference>
<dbReference type="PANTHER" id="PTHR38440:SF1">
    <property type="entry name" value="UPF0398 PROTEIN SPR0331"/>
    <property type="match status" value="1"/>
</dbReference>
<dbReference type="PANTHER" id="PTHR38440">
    <property type="entry name" value="UPF0398 PROTEIN YPSA"/>
    <property type="match status" value="1"/>
</dbReference>
<dbReference type="Pfam" id="PF06908">
    <property type="entry name" value="YpsA"/>
    <property type="match status" value="1"/>
</dbReference>
<dbReference type="PIRSF" id="PIRSF021290">
    <property type="entry name" value="DUF1273"/>
    <property type="match status" value="1"/>
</dbReference>
<dbReference type="SUPFAM" id="SSF102405">
    <property type="entry name" value="MCP/YpsA-like"/>
    <property type="match status" value="1"/>
</dbReference>
<protein>
    <recommendedName>
        <fullName evidence="1">UPF0398 protein BCAH820_1652</fullName>
    </recommendedName>
</protein>